<protein>
    <recommendedName>
        <fullName evidence="1">Tryptophan synthase alpha chain</fullName>
        <ecNumber evidence="1">4.2.1.20</ecNumber>
    </recommendedName>
</protein>
<sequence length="266" mass="28202">MSRIAQAFQRAQAQNRAAFIAYLCAGDPNFDTSLAACRAVITSGVDLLELGVPFSDPLADGLTNQLAAQRALESGMTAADVFRLVRRIREFSEVPIVFYTYYNLVFAHGIDAYVRAAKEAGVDGLLTLDLPPEESDEVSAACRAHGVQSVYIVAPTSPAERIAKIAQAATGFIYYVSREGVTGVQERVAANIPEAVAAIRRHTALPVVVGFGISNREQVRQVAAVADGVVVGSALVNCIRENLGSPERITAKLAAVAGDLVAGTKR</sequence>
<reference key="1">
    <citation type="journal article" date="2011" name="J. Bacteriol.">
        <title>Genome sequence of the verrucomicrobium Opitutus terrae PB90-1, an abundant inhabitant of rice paddy soil ecosystems.</title>
        <authorList>
            <person name="van Passel M.W."/>
            <person name="Kant R."/>
            <person name="Palva A."/>
            <person name="Copeland A."/>
            <person name="Lucas S."/>
            <person name="Lapidus A."/>
            <person name="Glavina del Rio T."/>
            <person name="Pitluck S."/>
            <person name="Goltsman E."/>
            <person name="Clum A."/>
            <person name="Sun H."/>
            <person name="Schmutz J."/>
            <person name="Larimer F.W."/>
            <person name="Land M.L."/>
            <person name="Hauser L."/>
            <person name="Kyrpides N."/>
            <person name="Mikhailova N."/>
            <person name="Richardson P.P."/>
            <person name="Janssen P.H."/>
            <person name="de Vos W.M."/>
            <person name="Smidt H."/>
        </authorList>
    </citation>
    <scope>NUCLEOTIDE SEQUENCE [LARGE SCALE GENOMIC DNA]</scope>
    <source>
        <strain>DSM 11246 / JCM 15787 / PB90-1</strain>
    </source>
</reference>
<dbReference type="EC" id="4.2.1.20" evidence="1"/>
<dbReference type="EMBL" id="CP001032">
    <property type="protein sequence ID" value="ACB75838.1"/>
    <property type="molecule type" value="Genomic_DNA"/>
</dbReference>
<dbReference type="RefSeq" id="WP_012375373.1">
    <property type="nucleotide sequence ID" value="NC_010571.1"/>
</dbReference>
<dbReference type="SMR" id="B1ZT49"/>
<dbReference type="STRING" id="452637.Oter_2556"/>
<dbReference type="KEGG" id="ote:Oter_2556"/>
<dbReference type="eggNOG" id="COG0159">
    <property type="taxonomic scope" value="Bacteria"/>
</dbReference>
<dbReference type="HOGENOM" id="CLU_016734_0_4_0"/>
<dbReference type="OrthoDB" id="9804578at2"/>
<dbReference type="UniPathway" id="UPA00035">
    <property type="reaction ID" value="UER00044"/>
</dbReference>
<dbReference type="Proteomes" id="UP000007013">
    <property type="component" value="Chromosome"/>
</dbReference>
<dbReference type="GO" id="GO:0005829">
    <property type="term" value="C:cytosol"/>
    <property type="evidence" value="ECO:0007669"/>
    <property type="project" value="TreeGrafter"/>
</dbReference>
<dbReference type="GO" id="GO:0004834">
    <property type="term" value="F:tryptophan synthase activity"/>
    <property type="evidence" value="ECO:0007669"/>
    <property type="project" value="UniProtKB-UniRule"/>
</dbReference>
<dbReference type="CDD" id="cd04724">
    <property type="entry name" value="Tryptophan_synthase_alpha"/>
    <property type="match status" value="1"/>
</dbReference>
<dbReference type="FunFam" id="3.20.20.70:FF:000037">
    <property type="entry name" value="Tryptophan synthase alpha chain"/>
    <property type="match status" value="1"/>
</dbReference>
<dbReference type="Gene3D" id="3.20.20.70">
    <property type="entry name" value="Aldolase class I"/>
    <property type="match status" value="1"/>
</dbReference>
<dbReference type="HAMAP" id="MF_00131">
    <property type="entry name" value="Trp_synth_alpha"/>
    <property type="match status" value="1"/>
</dbReference>
<dbReference type="InterPro" id="IPR013785">
    <property type="entry name" value="Aldolase_TIM"/>
</dbReference>
<dbReference type="InterPro" id="IPR011060">
    <property type="entry name" value="RibuloseP-bd_barrel"/>
</dbReference>
<dbReference type="InterPro" id="IPR018204">
    <property type="entry name" value="Trp_synthase_alpha_AS"/>
</dbReference>
<dbReference type="InterPro" id="IPR002028">
    <property type="entry name" value="Trp_synthase_suA"/>
</dbReference>
<dbReference type="NCBIfam" id="TIGR00262">
    <property type="entry name" value="trpA"/>
    <property type="match status" value="1"/>
</dbReference>
<dbReference type="PANTHER" id="PTHR43406:SF1">
    <property type="entry name" value="TRYPTOPHAN SYNTHASE ALPHA CHAIN, CHLOROPLASTIC"/>
    <property type="match status" value="1"/>
</dbReference>
<dbReference type="PANTHER" id="PTHR43406">
    <property type="entry name" value="TRYPTOPHAN SYNTHASE, ALPHA CHAIN"/>
    <property type="match status" value="1"/>
</dbReference>
<dbReference type="Pfam" id="PF00290">
    <property type="entry name" value="Trp_syntA"/>
    <property type="match status" value="1"/>
</dbReference>
<dbReference type="SUPFAM" id="SSF51366">
    <property type="entry name" value="Ribulose-phoshate binding barrel"/>
    <property type="match status" value="1"/>
</dbReference>
<dbReference type="PROSITE" id="PS00167">
    <property type="entry name" value="TRP_SYNTHASE_ALPHA"/>
    <property type="match status" value="1"/>
</dbReference>
<comment type="function">
    <text evidence="1">The alpha subunit is responsible for the aldol cleavage of indoleglycerol phosphate to indole and glyceraldehyde 3-phosphate.</text>
</comment>
<comment type="catalytic activity">
    <reaction evidence="1">
        <text>(1S,2R)-1-C-(indol-3-yl)glycerol 3-phosphate + L-serine = D-glyceraldehyde 3-phosphate + L-tryptophan + H2O</text>
        <dbReference type="Rhea" id="RHEA:10532"/>
        <dbReference type="ChEBI" id="CHEBI:15377"/>
        <dbReference type="ChEBI" id="CHEBI:33384"/>
        <dbReference type="ChEBI" id="CHEBI:57912"/>
        <dbReference type="ChEBI" id="CHEBI:58866"/>
        <dbReference type="ChEBI" id="CHEBI:59776"/>
        <dbReference type="EC" id="4.2.1.20"/>
    </reaction>
</comment>
<comment type="pathway">
    <text evidence="1">Amino-acid biosynthesis; L-tryptophan biosynthesis; L-tryptophan from chorismate: step 5/5.</text>
</comment>
<comment type="subunit">
    <text evidence="1">Tetramer of two alpha and two beta chains.</text>
</comment>
<comment type="similarity">
    <text evidence="1">Belongs to the TrpA family.</text>
</comment>
<proteinExistence type="inferred from homology"/>
<organism>
    <name type="scientific">Opitutus terrae (strain DSM 11246 / JCM 15787 / PB90-1)</name>
    <dbReference type="NCBI Taxonomy" id="452637"/>
    <lineage>
        <taxon>Bacteria</taxon>
        <taxon>Pseudomonadati</taxon>
        <taxon>Verrucomicrobiota</taxon>
        <taxon>Opitutia</taxon>
        <taxon>Opitutales</taxon>
        <taxon>Opitutaceae</taxon>
        <taxon>Opitutus</taxon>
    </lineage>
</organism>
<feature type="chain" id="PRO_1000095735" description="Tryptophan synthase alpha chain">
    <location>
        <begin position="1"/>
        <end position="266"/>
    </location>
</feature>
<feature type="active site" description="Proton acceptor" evidence="1">
    <location>
        <position position="49"/>
    </location>
</feature>
<feature type="active site" description="Proton acceptor" evidence="1">
    <location>
        <position position="60"/>
    </location>
</feature>
<name>TRPA_OPITP</name>
<gene>
    <name evidence="1" type="primary">trpA</name>
    <name type="ordered locus">Oter_2556</name>
</gene>
<keyword id="KW-0028">Amino-acid biosynthesis</keyword>
<keyword id="KW-0057">Aromatic amino acid biosynthesis</keyword>
<keyword id="KW-0456">Lyase</keyword>
<keyword id="KW-1185">Reference proteome</keyword>
<keyword id="KW-0822">Tryptophan biosynthesis</keyword>
<evidence type="ECO:0000255" key="1">
    <source>
        <dbReference type="HAMAP-Rule" id="MF_00131"/>
    </source>
</evidence>
<accession>B1ZT49</accession>